<proteinExistence type="inferred from homology"/>
<evidence type="ECO:0000255" key="1">
    <source>
        <dbReference type="HAMAP-Rule" id="MF_00661"/>
    </source>
</evidence>
<evidence type="ECO:0000256" key="2">
    <source>
        <dbReference type="SAM" id="MobiDB-lite"/>
    </source>
</evidence>
<gene>
    <name evidence="1" type="primary">rhlB</name>
    <name type="ordered locus">SeD_A4303</name>
</gene>
<feature type="chain" id="PRO_1000131301" description="ATP-dependent RNA helicase RhlB">
    <location>
        <begin position="1"/>
        <end position="421"/>
    </location>
</feature>
<feature type="domain" description="Helicase ATP-binding" evidence="1">
    <location>
        <begin position="40"/>
        <end position="219"/>
    </location>
</feature>
<feature type="domain" description="Helicase C-terminal" evidence="1">
    <location>
        <begin position="245"/>
        <end position="390"/>
    </location>
</feature>
<feature type="region of interest" description="Disordered" evidence="2">
    <location>
        <begin position="396"/>
        <end position="421"/>
    </location>
</feature>
<feature type="short sequence motif" description="Q motif">
    <location>
        <begin position="9"/>
        <end position="37"/>
    </location>
</feature>
<feature type="short sequence motif" description="DEAD box">
    <location>
        <begin position="165"/>
        <end position="168"/>
    </location>
</feature>
<feature type="compositionally biased region" description="Low complexity" evidence="2">
    <location>
        <begin position="402"/>
        <end position="414"/>
    </location>
</feature>
<feature type="binding site" evidence="1">
    <location>
        <begin position="53"/>
        <end position="60"/>
    </location>
    <ligand>
        <name>ATP</name>
        <dbReference type="ChEBI" id="CHEBI:30616"/>
    </ligand>
</feature>
<comment type="function">
    <text evidence="1">DEAD-box RNA helicase involved in RNA degradation. Has RNA-dependent ATPase activity and unwinds double-stranded RNA.</text>
</comment>
<comment type="catalytic activity">
    <reaction evidence="1">
        <text>ATP + H2O = ADP + phosphate + H(+)</text>
        <dbReference type="Rhea" id="RHEA:13065"/>
        <dbReference type="ChEBI" id="CHEBI:15377"/>
        <dbReference type="ChEBI" id="CHEBI:15378"/>
        <dbReference type="ChEBI" id="CHEBI:30616"/>
        <dbReference type="ChEBI" id="CHEBI:43474"/>
        <dbReference type="ChEBI" id="CHEBI:456216"/>
        <dbReference type="EC" id="3.6.4.13"/>
    </reaction>
</comment>
<comment type="subunit">
    <text evidence="1">Component of the RNA degradosome, which is a multiprotein complex involved in RNA processing and mRNA degradation.</text>
</comment>
<comment type="subcellular location">
    <subcellularLocation>
        <location evidence="1">Cytoplasm</location>
    </subcellularLocation>
</comment>
<comment type="similarity">
    <text evidence="1">Belongs to the DEAD box helicase family. RhlB subfamily.</text>
</comment>
<sequence>MSKTHLTEQKFSDFALHPQVVEALEKKRFYNCTPIQALALPLTLAGRDVAGQAQTGTGKTMAFLTSTFHYLLSHPAIDDRKVNQPRALIMAPTRELAVQIHADAEPLAQATGLKLGLAYGGDGYDKQLKVLESGVDILIGTTGRLIDYAKQNHINLGAIQVVVLDEADRMYDLGFIKDIRWLFRRMPPAAQRLNMLFSATLSYRVRELAFEQMNNAEYVEVEPEQKTGHRIKEELFYPSNEEKMRLLQTLIEEEWPDRAIIFANTKHRCEDIWGHLAADGHRVGLLTGDVAQKKRLRILDEFTRGDLDILVATDVAARGLHIPAVTHVFNYDLPDDCEDYVHRIGRTGRAGASGHSISLACEEYALNLPAIESYIGHSIPVSKYNPEALMNDLPKPLRLTRSRPGNGPRRAGAPRNRRRSG</sequence>
<protein>
    <recommendedName>
        <fullName evidence="1">ATP-dependent RNA helicase RhlB</fullName>
        <ecNumber evidence="1">3.6.4.13</ecNumber>
    </recommendedName>
</protein>
<name>RHLB_SALDC</name>
<dbReference type="EC" id="3.6.4.13" evidence="1"/>
<dbReference type="EMBL" id="CP001144">
    <property type="protein sequence ID" value="ACH76778.1"/>
    <property type="molecule type" value="Genomic_DNA"/>
</dbReference>
<dbReference type="RefSeq" id="WP_000047531.1">
    <property type="nucleotide sequence ID" value="NC_011205.1"/>
</dbReference>
<dbReference type="SMR" id="B5FN74"/>
<dbReference type="KEGG" id="sed:SeD_A4303"/>
<dbReference type="HOGENOM" id="CLU_003041_1_3_6"/>
<dbReference type="Proteomes" id="UP000008322">
    <property type="component" value="Chromosome"/>
</dbReference>
<dbReference type="GO" id="GO:0005829">
    <property type="term" value="C:cytosol"/>
    <property type="evidence" value="ECO:0007669"/>
    <property type="project" value="TreeGrafter"/>
</dbReference>
<dbReference type="GO" id="GO:0005524">
    <property type="term" value="F:ATP binding"/>
    <property type="evidence" value="ECO:0007669"/>
    <property type="project" value="UniProtKB-UniRule"/>
</dbReference>
<dbReference type="GO" id="GO:0016887">
    <property type="term" value="F:ATP hydrolysis activity"/>
    <property type="evidence" value="ECO:0007669"/>
    <property type="project" value="RHEA"/>
</dbReference>
<dbReference type="GO" id="GO:0003723">
    <property type="term" value="F:RNA binding"/>
    <property type="evidence" value="ECO:0007669"/>
    <property type="project" value="UniProtKB-UniRule"/>
</dbReference>
<dbReference type="GO" id="GO:0003724">
    <property type="term" value="F:RNA helicase activity"/>
    <property type="evidence" value="ECO:0007669"/>
    <property type="project" value="UniProtKB-UniRule"/>
</dbReference>
<dbReference type="GO" id="GO:0006401">
    <property type="term" value="P:RNA catabolic process"/>
    <property type="evidence" value="ECO:0007669"/>
    <property type="project" value="UniProtKB-UniRule"/>
</dbReference>
<dbReference type="CDD" id="cd00268">
    <property type="entry name" value="DEADc"/>
    <property type="match status" value="1"/>
</dbReference>
<dbReference type="CDD" id="cd18787">
    <property type="entry name" value="SF2_C_DEAD"/>
    <property type="match status" value="1"/>
</dbReference>
<dbReference type="FunFam" id="3.40.50.300:FF:000008">
    <property type="entry name" value="ATP-dependent RNA helicase RhlB"/>
    <property type="match status" value="1"/>
</dbReference>
<dbReference type="FunFam" id="3.40.50.300:FF:000312">
    <property type="entry name" value="ATP-dependent RNA helicase RhlB"/>
    <property type="match status" value="1"/>
</dbReference>
<dbReference type="Gene3D" id="3.40.50.300">
    <property type="entry name" value="P-loop containing nucleotide triphosphate hydrolases"/>
    <property type="match status" value="2"/>
</dbReference>
<dbReference type="HAMAP" id="MF_00661">
    <property type="entry name" value="DEAD_helicase_RhlB"/>
    <property type="match status" value="1"/>
</dbReference>
<dbReference type="InterPro" id="IPR011545">
    <property type="entry name" value="DEAD/DEAH_box_helicase_dom"/>
</dbReference>
<dbReference type="InterPro" id="IPR050079">
    <property type="entry name" value="DEAD_box_RNA_helicase"/>
</dbReference>
<dbReference type="InterPro" id="IPR014001">
    <property type="entry name" value="Helicase_ATP-bd"/>
</dbReference>
<dbReference type="InterPro" id="IPR001650">
    <property type="entry name" value="Helicase_C-like"/>
</dbReference>
<dbReference type="InterPro" id="IPR027417">
    <property type="entry name" value="P-loop_NTPase"/>
</dbReference>
<dbReference type="InterPro" id="IPR000629">
    <property type="entry name" value="RNA-helicase_DEAD-box_CS"/>
</dbReference>
<dbReference type="InterPro" id="IPR023554">
    <property type="entry name" value="RNA_helicase_ATP-dep_RhlB"/>
</dbReference>
<dbReference type="InterPro" id="IPR014014">
    <property type="entry name" value="RNA_helicase_DEAD_Q_motif"/>
</dbReference>
<dbReference type="NCBIfam" id="NF003419">
    <property type="entry name" value="PRK04837.1"/>
    <property type="match status" value="1"/>
</dbReference>
<dbReference type="PANTHER" id="PTHR47959:SF10">
    <property type="entry name" value="ATP-DEPENDENT RNA HELICASE RHLB"/>
    <property type="match status" value="1"/>
</dbReference>
<dbReference type="PANTHER" id="PTHR47959">
    <property type="entry name" value="ATP-DEPENDENT RNA HELICASE RHLE-RELATED"/>
    <property type="match status" value="1"/>
</dbReference>
<dbReference type="Pfam" id="PF00270">
    <property type="entry name" value="DEAD"/>
    <property type="match status" value="1"/>
</dbReference>
<dbReference type="Pfam" id="PF00271">
    <property type="entry name" value="Helicase_C"/>
    <property type="match status" value="1"/>
</dbReference>
<dbReference type="SMART" id="SM00487">
    <property type="entry name" value="DEXDc"/>
    <property type="match status" value="1"/>
</dbReference>
<dbReference type="SMART" id="SM00490">
    <property type="entry name" value="HELICc"/>
    <property type="match status" value="1"/>
</dbReference>
<dbReference type="SUPFAM" id="SSF52540">
    <property type="entry name" value="P-loop containing nucleoside triphosphate hydrolases"/>
    <property type="match status" value="1"/>
</dbReference>
<dbReference type="PROSITE" id="PS00039">
    <property type="entry name" value="DEAD_ATP_HELICASE"/>
    <property type="match status" value="1"/>
</dbReference>
<dbReference type="PROSITE" id="PS51192">
    <property type="entry name" value="HELICASE_ATP_BIND_1"/>
    <property type="match status" value="1"/>
</dbReference>
<dbReference type="PROSITE" id="PS51194">
    <property type="entry name" value="HELICASE_CTER"/>
    <property type="match status" value="1"/>
</dbReference>
<dbReference type="PROSITE" id="PS51195">
    <property type="entry name" value="Q_MOTIF"/>
    <property type="match status" value="1"/>
</dbReference>
<keyword id="KW-0067">ATP-binding</keyword>
<keyword id="KW-0963">Cytoplasm</keyword>
<keyword id="KW-0347">Helicase</keyword>
<keyword id="KW-0378">Hydrolase</keyword>
<keyword id="KW-0547">Nucleotide-binding</keyword>
<keyword id="KW-0694">RNA-binding</keyword>
<accession>B5FN74</accession>
<reference key="1">
    <citation type="journal article" date="2011" name="J. Bacteriol.">
        <title>Comparative genomics of 28 Salmonella enterica isolates: evidence for CRISPR-mediated adaptive sublineage evolution.</title>
        <authorList>
            <person name="Fricke W.F."/>
            <person name="Mammel M.K."/>
            <person name="McDermott P.F."/>
            <person name="Tartera C."/>
            <person name="White D.G."/>
            <person name="Leclerc J.E."/>
            <person name="Ravel J."/>
            <person name="Cebula T.A."/>
        </authorList>
    </citation>
    <scope>NUCLEOTIDE SEQUENCE [LARGE SCALE GENOMIC DNA]</scope>
    <source>
        <strain>CT_02021853</strain>
    </source>
</reference>
<organism>
    <name type="scientific">Salmonella dublin (strain CT_02021853)</name>
    <dbReference type="NCBI Taxonomy" id="439851"/>
    <lineage>
        <taxon>Bacteria</taxon>
        <taxon>Pseudomonadati</taxon>
        <taxon>Pseudomonadota</taxon>
        <taxon>Gammaproteobacteria</taxon>
        <taxon>Enterobacterales</taxon>
        <taxon>Enterobacteriaceae</taxon>
        <taxon>Salmonella</taxon>
    </lineage>
</organism>